<reference key="1">
    <citation type="journal article" date="1998" name="Science">
        <title>Complete genome sequence of Treponema pallidum, the syphilis spirochete.</title>
        <authorList>
            <person name="Fraser C.M."/>
            <person name="Norris S.J."/>
            <person name="Weinstock G.M."/>
            <person name="White O."/>
            <person name="Sutton G.G."/>
            <person name="Dodson R.J."/>
            <person name="Gwinn M.L."/>
            <person name="Hickey E.K."/>
            <person name="Clayton R.A."/>
            <person name="Ketchum K.A."/>
            <person name="Sodergren E."/>
            <person name="Hardham J.M."/>
            <person name="McLeod M.P."/>
            <person name="Salzberg S.L."/>
            <person name="Peterson J.D."/>
            <person name="Khalak H.G."/>
            <person name="Richardson D.L."/>
            <person name="Howell J.K."/>
            <person name="Chidambaram M."/>
            <person name="Utterback T.R."/>
            <person name="McDonald L.A."/>
            <person name="Artiach P."/>
            <person name="Bowman C."/>
            <person name="Cotton M.D."/>
            <person name="Fujii C."/>
            <person name="Garland S.A."/>
            <person name="Hatch B."/>
            <person name="Horst K."/>
            <person name="Roberts K.M."/>
            <person name="Sandusky M."/>
            <person name="Weidman J.F."/>
            <person name="Smith H.O."/>
            <person name="Venter J.C."/>
        </authorList>
    </citation>
    <scope>NUCLEOTIDE SEQUENCE [LARGE SCALE GENOMIC DNA]</scope>
    <source>
        <strain>Nichols</strain>
    </source>
</reference>
<gene>
    <name evidence="1" type="primary">thyX</name>
    <name type="ordered locus">TP_1007</name>
</gene>
<comment type="function">
    <text evidence="1">Catalyzes the reductive methylation of 2'-deoxyuridine-5'-monophosphate (dUMP) to 2'-deoxythymidine-5'-monophosphate (dTMP) while utilizing 5,10-methylenetetrahydrofolate (mTHF) as the methyl donor, and NADPH and FADH(2) as the reductant.</text>
</comment>
<comment type="catalytic activity">
    <reaction evidence="1">
        <text>dUMP + (6R)-5,10-methylene-5,6,7,8-tetrahydrofolate + NADPH + H(+) = dTMP + (6S)-5,6,7,8-tetrahydrofolate + NADP(+)</text>
        <dbReference type="Rhea" id="RHEA:29043"/>
        <dbReference type="ChEBI" id="CHEBI:15378"/>
        <dbReference type="ChEBI" id="CHEBI:15636"/>
        <dbReference type="ChEBI" id="CHEBI:57453"/>
        <dbReference type="ChEBI" id="CHEBI:57783"/>
        <dbReference type="ChEBI" id="CHEBI:58349"/>
        <dbReference type="ChEBI" id="CHEBI:63528"/>
        <dbReference type="ChEBI" id="CHEBI:246422"/>
        <dbReference type="EC" id="2.1.1.148"/>
    </reaction>
</comment>
<comment type="cofactor">
    <cofactor evidence="1">
        <name>FAD</name>
        <dbReference type="ChEBI" id="CHEBI:57692"/>
    </cofactor>
    <text evidence="1">Binds 4 FAD per tetramer. Each FAD binding site is formed by three monomers.</text>
</comment>
<comment type="pathway">
    <text evidence="1">Pyrimidine metabolism; dTTP biosynthesis.</text>
</comment>
<comment type="subunit">
    <text evidence="1">Homotetramer.</text>
</comment>
<comment type="similarity">
    <text evidence="1">Belongs to the thymidylate synthase ThyX family.</text>
</comment>
<accession>O83971</accession>
<name>THYX_TREPA</name>
<proteinExistence type="inferred from homology"/>
<sequence length="305" mass="34186">MTLRTLQAGVAVSIALDRVCFFCYNGAVAHCVVEAAEDILDRRFSVLDKGFVRLIDYLGGDARIVQAARVSYGAGTRTARDDAALIDFLLRNKHTSPFEQVVLTFHVRAPIFVARQWMRHRTARISEVSSRYSLLSHDCYVPQETSVAVQSTRNKQGRASEGISPEQQQEVRAAFEAQQKAACAAYDALIQKNIARELARINVPLSLYTEWYWQIDLHNLFHFLRLRASAHAQAEIRAYAEVIIEITRAVAPCATASFENHEKDGVQFSGREFAALKALLAGEGLSLEGKERARFEEKLRSGLQQ</sequence>
<organism>
    <name type="scientific">Treponema pallidum (strain Nichols)</name>
    <dbReference type="NCBI Taxonomy" id="243276"/>
    <lineage>
        <taxon>Bacteria</taxon>
        <taxon>Pseudomonadati</taxon>
        <taxon>Spirochaetota</taxon>
        <taxon>Spirochaetia</taxon>
        <taxon>Spirochaetales</taxon>
        <taxon>Treponemataceae</taxon>
        <taxon>Treponema</taxon>
    </lineage>
</organism>
<feature type="chain" id="PRO_0000175583" description="Flavin-dependent thymidylate synthase">
    <location>
        <begin position="1"/>
        <end position="305"/>
    </location>
</feature>
<feature type="domain" description="ThyX" evidence="2">
    <location>
        <begin position="50"/>
        <end position="261"/>
    </location>
</feature>
<feature type="short sequence motif" description="ThyX motif" evidence="1">
    <location>
        <begin position="119"/>
        <end position="129"/>
    </location>
</feature>
<feature type="active site" description="Involved in ionization of N3 of dUMP, leading to its activation" evidence="1">
    <location>
        <position position="227"/>
    </location>
</feature>
<feature type="binding site" evidence="1">
    <location>
        <position position="96"/>
    </location>
    <ligand>
        <name>FAD</name>
        <dbReference type="ChEBI" id="CHEBI:57692"/>
        <note>ligand shared between neighboring subunits</note>
    </ligand>
</feature>
<feature type="binding site" evidence="1">
    <location>
        <begin position="116"/>
        <end position="119"/>
    </location>
    <ligand>
        <name>dUMP</name>
        <dbReference type="ChEBI" id="CHEBI:246422"/>
        <note>ligand shared between dimeric partners</note>
    </ligand>
</feature>
<feature type="binding site" evidence="1">
    <location>
        <begin position="119"/>
        <end position="121"/>
    </location>
    <ligand>
        <name>FAD</name>
        <dbReference type="ChEBI" id="CHEBI:57692"/>
        <note>ligand shared between neighboring subunits</note>
    </ligand>
</feature>
<feature type="binding site" description="in other chain" evidence="1">
    <location>
        <begin position="127"/>
        <end position="131"/>
    </location>
    <ligand>
        <name>dUMP</name>
        <dbReference type="ChEBI" id="CHEBI:246422"/>
        <note>ligand shared between dimeric partners</note>
    </ligand>
</feature>
<feature type="binding site" evidence="1">
    <location>
        <position position="127"/>
    </location>
    <ligand>
        <name>FAD</name>
        <dbReference type="ChEBI" id="CHEBI:57692"/>
        <note>ligand shared between neighboring subunits</note>
    </ligand>
</feature>
<feature type="binding site" description="in other chain" evidence="1">
    <location>
        <position position="200"/>
    </location>
    <ligand>
        <name>dUMP</name>
        <dbReference type="ChEBI" id="CHEBI:246422"/>
        <note>ligand shared between dimeric partners</note>
    </ligand>
</feature>
<feature type="binding site" evidence="1">
    <location>
        <begin position="216"/>
        <end position="218"/>
    </location>
    <ligand>
        <name>FAD</name>
        <dbReference type="ChEBI" id="CHEBI:57692"/>
        <note>ligand shared between neighboring subunits</note>
    </ligand>
</feature>
<feature type="binding site" evidence="1">
    <location>
        <position position="222"/>
    </location>
    <ligand>
        <name>FAD</name>
        <dbReference type="ChEBI" id="CHEBI:57692"/>
        <note>ligand shared between neighboring subunits</note>
    </ligand>
</feature>
<feature type="binding site" evidence="1">
    <location>
        <position position="227"/>
    </location>
    <ligand>
        <name>dUMP</name>
        <dbReference type="ChEBI" id="CHEBI:246422"/>
        <note>ligand shared between dimeric partners</note>
    </ligand>
</feature>
<dbReference type="EC" id="2.1.1.148" evidence="1"/>
<dbReference type="EMBL" id="AE000520">
    <property type="protein sequence ID" value="AAC65955.1"/>
    <property type="molecule type" value="Genomic_DNA"/>
</dbReference>
<dbReference type="PIR" id="A71255">
    <property type="entry name" value="A71255"/>
</dbReference>
<dbReference type="SMR" id="O83971"/>
<dbReference type="IntAct" id="O83971">
    <property type="interactions" value="6"/>
</dbReference>
<dbReference type="STRING" id="243276.TP_1007"/>
<dbReference type="EnsemblBacteria" id="AAC65955">
    <property type="protein sequence ID" value="AAC65955"/>
    <property type="gene ID" value="TP_1007"/>
</dbReference>
<dbReference type="KEGG" id="tpa:TP_1007"/>
<dbReference type="KEGG" id="tpw:TPANIC_1007"/>
<dbReference type="eggNOG" id="COG1351">
    <property type="taxonomic scope" value="Bacteria"/>
</dbReference>
<dbReference type="HOGENOM" id="CLU_067790_0_0_12"/>
<dbReference type="OrthoDB" id="9774464at2"/>
<dbReference type="UniPathway" id="UPA00575"/>
<dbReference type="Proteomes" id="UP000000811">
    <property type="component" value="Chromosome"/>
</dbReference>
<dbReference type="GO" id="GO:0050660">
    <property type="term" value="F:flavin adenine dinucleotide binding"/>
    <property type="evidence" value="ECO:0007669"/>
    <property type="project" value="InterPro"/>
</dbReference>
<dbReference type="GO" id="GO:0070402">
    <property type="term" value="F:NADPH binding"/>
    <property type="evidence" value="ECO:0007669"/>
    <property type="project" value="TreeGrafter"/>
</dbReference>
<dbReference type="GO" id="GO:0050797">
    <property type="term" value="F:thymidylate synthase (FAD) activity"/>
    <property type="evidence" value="ECO:0007669"/>
    <property type="project" value="UniProtKB-UniRule"/>
</dbReference>
<dbReference type="GO" id="GO:0004799">
    <property type="term" value="F:thymidylate synthase activity"/>
    <property type="evidence" value="ECO:0007669"/>
    <property type="project" value="TreeGrafter"/>
</dbReference>
<dbReference type="GO" id="GO:0006231">
    <property type="term" value="P:dTMP biosynthetic process"/>
    <property type="evidence" value="ECO:0007669"/>
    <property type="project" value="UniProtKB-UniRule"/>
</dbReference>
<dbReference type="GO" id="GO:0006235">
    <property type="term" value="P:dTTP biosynthetic process"/>
    <property type="evidence" value="ECO:0007669"/>
    <property type="project" value="UniProtKB-UniRule"/>
</dbReference>
<dbReference type="GO" id="GO:0032259">
    <property type="term" value="P:methylation"/>
    <property type="evidence" value="ECO:0007669"/>
    <property type="project" value="UniProtKB-KW"/>
</dbReference>
<dbReference type="CDD" id="cd20175">
    <property type="entry name" value="ThyX"/>
    <property type="match status" value="1"/>
</dbReference>
<dbReference type="Gene3D" id="3.30.1360.170">
    <property type="match status" value="1"/>
</dbReference>
<dbReference type="HAMAP" id="MF_01408">
    <property type="entry name" value="ThyX"/>
    <property type="match status" value="1"/>
</dbReference>
<dbReference type="InterPro" id="IPR003669">
    <property type="entry name" value="Thymidylate_synthase_ThyX"/>
</dbReference>
<dbReference type="InterPro" id="IPR036098">
    <property type="entry name" value="Thymidylate_synthase_ThyX_sf"/>
</dbReference>
<dbReference type="NCBIfam" id="TIGR02170">
    <property type="entry name" value="thyX"/>
    <property type="match status" value="1"/>
</dbReference>
<dbReference type="PANTHER" id="PTHR34934">
    <property type="entry name" value="FLAVIN-DEPENDENT THYMIDYLATE SYNTHASE"/>
    <property type="match status" value="1"/>
</dbReference>
<dbReference type="PANTHER" id="PTHR34934:SF1">
    <property type="entry name" value="FLAVIN-DEPENDENT THYMIDYLATE SYNTHASE"/>
    <property type="match status" value="1"/>
</dbReference>
<dbReference type="Pfam" id="PF02511">
    <property type="entry name" value="Thy1"/>
    <property type="match status" value="1"/>
</dbReference>
<dbReference type="SUPFAM" id="SSF69796">
    <property type="entry name" value="Thymidylate synthase-complementing protein Thy1"/>
    <property type="match status" value="1"/>
</dbReference>
<dbReference type="PROSITE" id="PS51331">
    <property type="entry name" value="THYX"/>
    <property type="match status" value="1"/>
</dbReference>
<protein>
    <recommendedName>
        <fullName evidence="1">Flavin-dependent thymidylate synthase</fullName>
        <shortName evidence="1">FDTS</shortName>
        <ecNumber evidence="1">2.1.1.148</ecNumber>
    </recommendedName>
    <alternativeName>
        <fullName evidence="1">FAD-dependent thymidylate synthase</fullName>
    </alternativeName>
    <alternativeName>
        <fullName evidence="1">Thymidylate synthase ThyX</fullName>
        <shortName evidence="1">TS</shortName>
        <shortName evidence="1">TSase</shortName>
    </alternativeName>
</protein>
<keyword id="KW-0274">FAD</keyword>
<keyword id="KW-0285">Flavoprotein</keyword>
<keyword id="KW-0489">Methyltransferase</keyword>
<keyword id="KW-0521">NADP</keyword>
<keyword id="KW-0545">Nucleotide biosynthesis</keyword>
<keyword id="KW-1185">Reference proteome</keyword>
<keyword id="KW-0808">Transferase</keyword>
<evidence type="ECO:0000255" key="1">
    <source>
        <dbReference type="HAMAP-Rule" id="MF_01408"/>
    </source>
</evidence>
<evidence type="ECO:0000255" key="2">
    <source>
        <dbReference type="PROSITE-ProRule" id="PRU00661"/>
    </source>
</evidence>